<gene>
    <name evidence="1" type="primary">rlmN</name>
    <name type="ordered locus">PFLU_5060</name>
</gene>
<evidence type="ECO:0000255" key="1">
    <source>
        <dbReference type="HAMAP-Rule" id="MF_01849"/>
    </source>
</evidence>
<evidence type="ECO:0000255" key="2">
    <source>
        <dbReference type="PROSITE-ProRule" id="PRU01266"/>
    </source>
</evidence>
<feature type="chain" id="PRO_1000216124" description="Dual-specificity RNA methyltransferase RlmN">
    <location>
        <begin position="1"/>
        <end position="382"/>
    </location>
</feature>
<feature type="domain" description="Radical SAM core" evidence="2">
    <location>
        <begin position="102"/>
        <end position="342"/>
    </location>
</feature>
<feature type="active site" description="Proton acceptor" evidence="1">
    <location>
        <position position="96"/>
    </location>
</feature>
<feature type="active site" description="S-methylcysteine intermediate" evidence="1">
    <location>
        <position position="345"/>
    </location>
</feature>
<feature type="binding site" evidence="1">
    <location>
        <position position="116"/>
    </location>
    <ligand>
        <name>[4Fe-4S] cluster</name>
        <dbReference type="ChEBI" id="CHEBI:49883"/>
        <note>4Fe-4S-S-AdoMet</note>
    </ligand>
</feature>
<feature type="binding site" evidence="1">
    <location>
        <position position="120"/>
    </location>
    <ligand>
        <name>[4Fe-4S] cluster</name>
        <dbReference type="ChEBI" id="CHEBI:49883"/>
        <note>4Fe-4S-S-AdoMet</note>
    </ligand>
</feature>
<feature type="binding site" evidence="1">
    <location>
        <position position="123"/>
    </location>
    <ligand>
        <name>[4Fe-4S] cluster</name>
        <dbReference type="ChEBI" id="CHEBI:49883"/>
        <note>4Fe-4S-S-AdoMet</note>
    </ligand>
</feature>
<feature type="binding site" evidence="1">
    <location>
        <begin position="170"/>
        <end position="171"/>
    </location>
    <ligand>
        <name>S-adenosyl-L-methionine</name>
        <dbReference type="ChEBI" id="CHEBI:59789"/>
    </ligand>
</feature>
<feature type="binding site" evidence="1">
    <location>
        <position position="202"/>
    </location>
    <ligand>
        <name>S-adenosyl-L-methionine</name>
        <dbReference type="ChEBI" id="CHEBI:59789"/>
    </ligand>
</feature>
<feature type="binding site" evidence="1">
    <location>
        <begin position="224"/>
        <end position="226"/>
    </location>
    <ligand>
        <name>S-adenosyl-L-methionine</name>
        <dbReference type="ChEBI" id="CHEBI:59789"/>
    </ligand>
</feature>
<feature type="binding site" evidence="1">
    <location>
        <position position="302"/>
    </location>
    <ligand>
        <name>S-adenosyl-L-methionine</name>
        <dbReference type="ChEBI" id="CHEBI:59789"/>
    </ligand>
</feature>
<feature type="disulfide bond" description="(transient)" evidence="1">
    <location>
        <begin position="109"/>
        <end position="345"/>
    </location>
</feature>
<organism>
    <name type="scientific">Pseudomonas fluorescens (strain SBW25)</name>
    <dbReference type="NCBI Taxonomy" id="216595"/>
    <lineage>
        <taxon>Bacteria</taxon>
        <taxon>Pseudomonadati</taxon>
        <taxon>Pseudomonadota</taxon>
        <taxon>Gammaproteobacteria</taxon>
        <taxon>Pseudomonadales</taxon>
        <taxon>Pseudomonadaceae</taxon>
        <taxon>Pseudomonas</taxon>
    </lineage>
</organism>
<protein>
    <recommendedName>
        <fullName evidence="1">Dual-specificity RNA methyltransferase RlmN</fullName>
        <ecNumber evidence="1">2.1.1.192</ecNumber>
    </recommendedName>
    <alternativeName>
        <fullName evidence="1">23S rRNA (adenine(2503)-C(2))-methyltransferase</fullName>
    </alternativeName>
    <alternativeName>
        <fullName evidence="1">23S rRNA m2A2503 methyltransferase</fullName>
    </alternativeName>
    <alternativeName>
        <fullName evidence="1">Ribosomal RNA large subunit methyltransferase N</fullName>
    </alternativeName>
    <alternativeName>
        <fullName evidence="1">tRNA (adenine(37)-C(2))-methyltransferase</fullName>
    </alternativeName>
    <alternativeName>
        <fullName evidence="1">tRNA m2A37 methyltransferase</fullName>
    </alternativeName>
</protein>
<dbReference type="EC" id="2.1.1.192" evidence="1"/>
<dbReference type="EMBL" id="AM181176">
    <property type="protein sequence ID" value="CAY52051.1"/>
    <property type="molecule type" value="Genomic_DNA"/>
</dbReference>
<dbReference type="RefSeq" id="WP_003238464.1">
    <property type="nucleotide sequence ID" value="NC_012660.1"/>
</dbReference>
<dbReference type="SMR" id="C3K1L7"/>
<dbReference type="STRING" id="294.SRM1_04648"/>
<dbReference type="GeneID" id="93466674"/>
<dbReference type="eggNOG" id="COG0820">
    <property type="taxonomic scope" value="Bacteria"/>
</dbReference>
<dbReference type="HOGENOM" id="CLU_029101_0_0_6"/>
<dbReference type="OrthoDB" id="9793973at2"/>
<dbReference type="GO" id="GO:0005737">
    <property type="term" value="C:cytoplasm"/>
    <property type="evidence" value="ECO:0007669"/>
    <property type="project" value="UniProtKB-SubCell"/>
</dbReference>
<dbReference type="GO" id="GO:0051539">
    <property type="term" value="F:4 iron, 4 sulfur cluster binding"/>
    <property type="evidence" value="ECO:0007669"/>
    <property type="project" value="UniProtKB-UniRule"/>
</dbReference>
<dbReference type="GO" id="GO:0046872">
    <property type="term" value="F:metal ion binding"/>
    <property type="evidence" value="ECO:0007669"/>
    <property type="project" value="UniProtKB-KW"/>
</dbReference>
<dbReference type="GO" id="GO:0070040">
    <property type="term" value="F:rRNA (adenine(2503)-C2-)-methyltransferase activity"/>
    <property type="evidence" value="ECO:0007669"/>
    <property type="project" value="UniProtKB-UniRule"/>
</dbReference>
<dbReference type="GO" id="GO:0019843">
    <property type="term" value="F:rRNA binding"/>
    <property type="evidence" value="ECO:0007669"/>
    <property type="project" value="UniProtKB-UniRule"/>
</dbReference>
<dbReference type="GO" id="GO:0002935">
    <property type="term" value="F:tRNA (adenine(37)-C2)-methyltransferase activity"/>
    <property type="evidence" value="ECO:0007669"/>
    <property type="project" value="UniProtKB-UniRule"/>
</dbReference>
<dbReference type="GO" id="GO:0000049">
    <property type="term" value="F:tRNA binding"/>
    <property type="evidence" value="ECO:0007669"/>
    <property type="project" value="UniProtKB-UniRule"/>
</dbReference>
<dbReference type="GO" id="GO:0070475">
    <property type="term" value="P:rRNA base methylation"/>
    <property type="evidence" value="ECO:0007669"/>
    <property type="project" value="UniProtKB-UniRule"/>
</dbReference>
<dbReference type="GO" id="GO:0030488">
    <property type="term" value="P:tRNA methylation"/>
    <property type="evidence" value="ECO:0007669"/>
    <property type="project" value="UniProtKB-UniRule"/>
</dbReference>
<dbReference type="CDD" id="cd01335">
    <property type="entry name" value="Radical_SAM"/>
    <property type="match status" value="1"/>
</dbReference>
<dbReference type="FunFam" id="1.10.150.530:FF:000003">
    <property type="entry name" value="Dual-specificity RNA methyltransferase RlmN"/>
    <property type="match status" value="1"/>
</dbReference>
<dbReference type="FunFam" id="3.20.20.70:FF:000008">
    <property type="entry name" value="Dual-specificity RNA methyltransferase RlmN"/>
    <property type="match status" value="1"/>
</dbReference>
<dbReference type="Gene3D" id="1.10.150.530">
    <property type="match status" value="1"/>
</dbReference>
<dbReference type="Gene3D" id="3.20.20.70">
    <property type="entry name" value="Aldolase class I"/>
    <property type="match status" value="1"/>
</dbReference>
<dbReference type="HAMAP" id="MF_01849">
    <property type="entry name" value="RNA_methyltr_RlmN"/>
    <property type="match status" value="1"/>
</dbReference>
<dbReference type="InterPro" id="IPR013785">
    <property type="entry name" value="Aldolase_TIM"/>
</dbReference>
<dbReference type="InterPro" id="IPR040072">
    <property type="entry name" value="Methyltransferase_A"/>
</dbReference>
<dbReference type="InterPro" id="IPR048641">
    <property type="entry name" value="RlmN_N"/>
</dbReference>
<dbReference type="InterPro" id="IPR027492">
    <property type="entry name" value="RNA_MTrfase_RlmN"/>
</dbReference>
<dbReference type="InterPro" id="IPR004383">
    <property type="entry name" value="rRNA_lsu_MTrfase_RlmN/Cfr"/>
</dbReference>
<dbReference type="InterPro" id="IPR007197">
    <property type="entry name" value="rSAM"/>
</dbReference>
<dbReference type="NCBIfam" id="TIGR00048">
    <property type="entry name" value="rRNA_mod_RlmN"/>
    <property type="match status" value="1"/>
</dbReference>
<dbReference type="PANTHER" id="PTHR30544">
    <property type="entry name" value="23S RRNA METHYLTRANSFERASE"/>
    <property type="match status" value="1"/>
</dbReference>
<dbReference type="PANTHER" id="PTHR30544:SF5">
    <property type="entry name" value="RADICAL SAM CORE DOMAIN-CONTAINING PROTEIN"/>
    <property type="match status" value="1"/>
</dbReference>
<dbReference type="Pfam" id="PF04055">
    <property type="entry name" value="Radical_SAM"/>
    <property type="match status" value="1"/>
</dbReference>
<dbReference type="Pfam" id="PF21016">
    <property type="entry name" value="RlmN_N"/>
    <property type="match status" value="1"/>
</dbReference>
<dbReference type="PIRSF" id="PIRSF006004">
    <property type="entry name" value="CHP00048"/>
    <property type="match status" value="1"/>
</dbReference>
<dbReference type="SFLD" id="SFLDF00275">
    <property type="entry name" value="adenosine_C2_methyltransferase"/>
    <property type="match status" value="1"/>
</dbReference>
<dbReference type="SFLD" id="SFLDG01062">
    <property type="entry name" value="methyltransferase_(Class_A)"/>
    <property type="match status" value="1"/>
</dbReference>
<dbReference type="SUPFAM" id="SSF102114">
    <property type="entry name" value="Radical SAM enzymes"/>
    <property type="match status" value="1"/>
</dbReference>
<dbReference type="PROSITE" id="PS51918">
    <property type="entry name" value="RADICAL_SAM"/>
    <property type="match status" value="1"/>
</dbReference>
<name>RLMN_PSEFS</name>
<accession>C3K1L7</accession>
<sequence>MTTSTVKTNLLGLTQPEMEKFFDSIGEKRFRAGQVMKWIHHFGVDDFDAMTNVSKALRDKLKAIAEVRGPEVVSEDISSDGTRKWVVRVASGSCVETVYIPQGKRGTLCVSSQAGCALDCSFCSTGKQGFNSNLTAAEVIGQVWIANKSFGSVPATVDRAITNVVMMGMGEPLLNFDNVIAAMHLMMDDLGYGISKRRVTLSTSGVVPMIDELAKHIDVSLALSLHAPNDALRNQLVPINKKYPLKMLLESCQRYMATLGEKRVLTIEYTMLKDINDKVEHAVEMIELLKNTPCKINLIPFNPFPHSGYERPSNNAIRRFQDQLHQAGYNVTVRTTRGEDIDAACGQLVGQVMDRTRRSERYIAVRELNAADDLPQIAVNRI</sequence>
<keyword id="KW-0004">4Fe-4S</keyword>
<keyword id="KW-0963">Cytoplasm</keyword>
<keyword id="KW-1015">Disulfide bond</keyword>
<keyword id="KW-0408">Iron</keyword>
<keyword id="KW-0411">Iron-sulfur</keyword>
<keyword id="KW-0479">Metal-binding</keyword>
<keyword id="KW-0489">Methyltransferase</keyword>
<keyword id="KW-0698">rRNA processing</keyword>
<keyword id="KW-0949">S-adenosyl-L-methionine</keyword>
<keyword id="KW-0808">Transferase</keyword>
<keyword id="KW-0819">tRNA processing</keyword>
<reference key="1">
    <citation type="journal article" date="2009" name="Genome Biol.">
        <title>Genomic and genetic analyses of diversity and plant interactions of Pseudomonas fluorescens.</title>
        <authorList>
            <person name="Silby M.W."/>
            <person name="Cerdeno-Tarraga A.M."/>
            <person name="Vernikos G.S."/>
            <person name="Giddens S.R."/>
            <person name="Jackson R.W."/>
            <person name="Preston G.M."/>
            <person name="Zhang X.-X."/>
            <person name="Moon C.D."/>
            <person name="Gehrig S.M."/>
            <person name="Godfrey S.A.C."/>
            <person name="Knight C.G."/>
            <person name="Malone J.G."/>
            <person name="Robinson Z."/>
            <person name="Spiers A.J."/>
            <person name="Harris S."/>
            <person name="Challis G.L."/>
            <person name="Yaxley A.M."/>
            <person name="Harris D."/>
            <person name="Seeger K."/>
            <person name="Murphy L."/>
            <person name="Rutter S."/>
            <person name="Squares R."/>
            <person name="Quail M.A."/>
            <person name="Saunders E."/>
            <person name="Mavromatis K."/>
            <person name="Brettin T.S."/>
            <person name="Bentley S.D."/>
            <person name="Hothersall J."/>
            <person name="Stephens E."/>
            <person name="Thomas C.M."/>
            <person name="Parkhill J."/>
            <person name="Levy S.B."/>
            <person name="Rainey P.B."/>
            <person name="Thomson N.R."/>
        </authorList>
    </citation>
    <scope>NUCLEOTIDE SEQUENCE [LARGE SCALE GENOMIC DNA]</scope>
    <source>
        <strain>SBW25</strain>
    </source>
</reference>
<proteinExistence type="inferred from homology"/>
<comment type="function">
    <text evidence="1">Specifically methylates position 2 of adenine 2503 in 23S rRNA and position 2 of adenine 37 in tRNAs. m2A2503 modification seems to play a crucial role in the proofreading step occurring at the peptidyl transferase center and thus would serve to optimize ribosomal fidelity.</text>
</comment>
<comment type="catalytic activity">
    <reaction evidence="1">
        <text>adenosine(2503) in 23S rRNA + 2 reduced [2Fe-2S]-[ferredoxin] + 2 S-adenosyl-L-methionine = 2-methyladenosine(2503) in 23S rRNA + 5'-deoxyadenosine + L-methionine + 2 oxidized [2Fe-2S]-[ferredoxin] + S-adenosyl-L-homocysteine</text>
        <dbReference type="Rhea" id="RHEA:42916"/>
        <dbReference type="Rhea" id="RHEA-COMP:10000"/>
        <dbReference type="Rhea" id="RHEA-COMP:10001"/>
        <dbReference type="Rhea" id="RHEA-COMP:10152"/>
        <dbReference type="Rhea" id="RHEA-COMP:10282"/>
        <dbReference type="ChEBI" id="CHEBI:17319"/>
        <dbReference type="ChEBI" id="CHEBI:33737"/>
        <dbReference type="ChEBI" id="CHEBI:33738"/>
        <dbReference type="ChEBI" id="CHEBI:57844"/>
        <dbReference type="ChEBI" id="CHEBI:57856"/>
        <dbReference type="ChEBI" id="CHEBI:59789"/>
        <dbReference type="ChEBI" id="CHEBI:74411"/>
        <dbReference type="ChEBI" id="CHEBI:74497"/>
        <dbReference type="EC" id="2.1.1.192"/>
    </reaction>
</comment>
<comment type="catalytic activity">
    <reaction evidence="1">
        <text>adenosine(37) in tRNA + 2 reduced [2Fe-2S]-[ferredoxin] + 2 S-adenosyl-L-methionine = 2-methyladenosine(37) in tRNA + 5'-deoxyadenosine + L-methionine + 2 oxidized [2Fe-2S]-[ferredoxin] + S-adenosyl-L-homocysteine</text>
        <dbReference type="Rhea" id="RHEA:43332"/>
        <dbReference type="Rhea" id="RHEA-COMP:10000"/>
        <dbReference type="Rhea" id="RHEA-COMP:10001"/>
        <dbReference type="Rhea" id="RHEA-COMP:10162"/>
        <dbReference type="Rhea" id="RHEA-COMP:10485"/>
        <dbReference type="ChEBI" id="CHEBI:17319"/>
        <dbReference type="ChEBI" id="CHEBI:33737"/>
        <dbReference type="ChEBI" id="CHEBI:33738"/>
        <dbReference type="ChEBI" id="CHEBI:57844"/>
        <dbReference type="ChEBI" id="CHEBI:57856"/>
        <dbReference type="ChEBI" id="CHEBI:59789"/>
        <dbReference type="ChEBI" id="CHEBI:74411"/>
        <dbReference type="ChEBI" id="CHEBI:74497"/>
        <dbReference type="EC" id="2.1.1.192"/>
    </reaction>
</comment>
<comment type="cofactor">
    <cofactor evidence="1">
        <name>[4Fe-4S] cluster</name>
        <dbReference type="ChEBI" id="CHEBI:49883"/>
    </cofactor>
    <text evidence="1">Binds 1 [4Fe-4S] cluster. The cluster is coordinated with 3 cysteines and an exchangeable S-adenosyl-L-methionine.</text>
</comment>
<comment type="subcellular location">
    <subcellularLocation>
        <location evidence="1">Cytoplasm</location>
    </subcellularLocation>
</comment>
<comment type="miscellaneous">
    <text evidence="1">Reaction proceeds by a ping-pong mechanism involving intermediate methylation of a conserved cysteine residue.</text>
</comment>
<comment type="similarity">
    <text evidence="1">Belongs to the radical SAM superfamily. RlmN family.</text>
</comment>